<gene>
    <name evidence="1" type="primary">rimM</name>
    <name type="ordered locus">PST_1192</name>
</gene>
<reference key="1">
    <citation type="journal article" date="2008" name="Proc. Natl. Acad. Sci. U.S.A.">
        <title>Nitrogen fixation island and rhizosphere competence traits in the genome of root-associated Pseudomonas stutzeri A1501.</title>
        <authorList>
            <person name="Yan Y."/>
            <person name="Yang J."/>
            <person name="Dou Y."/>
            <person name="Chen M."/>
            <person name="Ping S."/>
            <person name="Peng J."/>
            <person name="Lu W."/>
            <person name="Zhang W."/>
            <person name="Yao Z."/>
            <person name="Li H."/>
            <person name="Liu W."/>
            <person name="He S."/>
            <person name="Geng L."/>
            <person name="Zhang X."/>
            <person name="Yang F."/>
            <person name="Yu H."/>
            <person name="Zhan Y."/>
            <person name="Li D."/>
            <person name="Lin Z."/>
            <person name="Wang Y."/>
            <person name="Elmerich C."/>
            <person name="Lin M."/>
            <person name="Jin Q."/>
        </authorList>
    </citation>
    <scope>NUCLEOTIDE SEQUENCE [LARGE SCALE GENOMIC DNA]</scope>
    <source>
        <strain>A1501</strain>
    </source>
</reference>
<keyword id="KW-0143">Chaperone</keyword>
<keyword id="KW-0963">Cytoplasm</keyword>
<keyword id="KW-1185">Reference proteome</keyword>
<keyword id="KW-0690">Ribosome biogenesis</keyword>
<keyword id="KW-0698">rRNA processing</keyword>
<feature type="chain" id="PRO_1000001220" description="Ribosome maturation factor RimM">
    <location>
        <begin position="1"/>
        <end position="178"/>
    </location>
</feature>
<feature type="domain" description="PRC barrel" evidence="1">
    <location>
        <begin position="101"/>
        <end position="178"/>
    </location>
</feature>
<proteinExistence type="inferred from homology"/>
<evidence type="ECO:0000255" key="1">
    <source>
        <dbReference type="HAMAP-Rule" id="MF_00014"/>
    </source>
</evidence>
<sequence length="178" mass="19953">MSAMSAPSDELVVIGKIVSVHGVRGDVKVYSFTDPIDNLLDYRRWTLRRGDEVKQVELVKGRLQGKILVASLKGLTDREVARTYADFEICVPRSELPALDDGEYYWYQLQGLKVLNQAGQLLGQVDHLLETGANDVLVVKPCAGSLDDRERLLPYTDHCVLKVDLDSGEMQVDWDADF</sequence>
<comment type="function">
    <text evidence="1">An accessory protein needed during the final step in the assembly of 30S ribosomal subunit, possibly for assembly of the head region. Essential for efficient processing of 16S rRNA. May be needed both before and after RbfA during the maturation of 16S rRNA. It has affinity for free ribosomal 30S subunits but not for 70S ribosomes.</text>
</comment>
<comment type="subunit">
    <text evidence="1">Binds ribosomal protein uS19.</text>
</comment>
<comment type="subcellular location">
    <subcellularLocation>
        <location evidence="1">Cytoplasm</location>
    </subcellularLocation>
</comment>
<comment type="domain">
    <text evidence="1">The PRC barrel domain binds ribosomal protein uS19.</text>
</comment>
<comment type="similarity">
    <text evidence="1">Belongs to the RimM family.</text>
</comment>
<organism>
    <name type="scientific">Stutzerimonas stutzeri (strain A1501)</name>
    <name type="common">Pseudomonas stutzeri</name>
    <dbReference type="NCBI Taxonomy" id="379731"/>
    <lineage>
        <taxon>Bacteria</taxon>
        <taxon>Pseudomonadati</taxon>
        <taxon>Pseudomonadota</taxon>
        <taxon>Gammaproteobacteria</taxon>
        <taxon>Pseudomonadales</taxon>
        <taxon>Pseudomonadaceae</taxon>
        <taxon>Stutzerimonas</taxon>
    </lineage>
</organism>
<protein>
    <recommendedName>
        <fullName evidence="1">Ribosome maturation factor RimM</fullName>
    </recommendedName>
</protein>
<name>RIMM_STUS1</name>
<accession>A4VIT6</accession>
<dbReference type="EMBL" id="CP000304">
    <property type="protein sequence ID" value="ABP78887.1"/>
    <property type="molecule type" value="Genomic_DNA"/>
</dbReference>
<dbReference type="RefSeq" id="WP_011912374.1">
    <property type="nucleotide sequence ID" value="NC_009434.1"/>
</dbReference>
<dbReference type="SMR" id="A4VIT6"/>
<dbReference type="KEGG" id="psa:PST_1192"/>
<dbReference type="eggNOG" id="COG0806">
    <property type="taxonomic scope" value="Bacteria"/>
</dbReference>
<dbReference type="HOGENOM" id="CLU_077636_1_0_6"/>
<dbReference type="Proteomes" id="UP000000233">
    <property type="component" value="Chromosome"/>
</dbReference>
<dbReference type="GO" id="GO:0005737">
    <property type="term" value="C:cytoplasm"/>
    <property type="evidence" value="ECO:0007669"/>
    <property type="project" value="UniProtKB-SubCell"/>
</dbReference>
<dbReference type="GO" id="GO:0005840">
    <property type="term" value="C:ribosome"/>
    <property type="evidence" value="ECO:0007669"/>
    <property type="project" value="InterPro"/>
</dbReference>
<dbReference type="GO" id="GO:0043022">
    <property type="term" value="F:ribosome binding"/>
    <property type="evidence" value="ECO:0007669"/>
    <property type="project" value="InterPro"/>
</dbReference>
<dbReference type="GO" id="GO:0042274">
    <property type="term" value="P:ribosomal small subunit biogenesis"/>
    <property type="evidence" value="ECO:0007669"/>
    <property type="project" value="UniProtKB-UniRule"/>
</dbReference>
<dbReference type="GO" id="GO:0006364">
    <property type="term" value="P:rRNA processing"/>
    <property type="evidence" value="ECO:0007669"/>
    <property type="project" value="UniProtKB-UniRule"/>
</dbReference>
<dbReference type="Gene3D" id="2.30.30.240">
    <property type="entry name" value="PRC-barrel domain"/>
    <property type="match status" value="1"/>
</dbReference>
<dbReference type="Gene3D" id="2.40.30.60">
    <property type="entry name" value="RimM"/>
    <property type="match status" value="1"/>
</dbReference>
<dbReference type="HAMAP" id="MF_00014">
    <property type="entry name" value="Ribosome_mat_RimM"/>
    <property type="match status" value="1"/>
</dbReference>
<dbReference type="InterPro" id="IPR011033">
    <property type="entry name" value="PRC_barrel-like_sf"/>
</dbReference>
<dbReference type="InterPro" id="IPR056792">
    <property type="entry name" value="PRC_RimM"/>
</dbReference>
<dbReference type="InterPro" id="IPR011961">
    <property type="entry name" value="RimM"/>
</dbReference>
<dbReference type="InterPro" id="IPR002676">
    <property type="entry name" value="RimM_N"/>
</dbReference>
<dbReference type="InterPro" id="IPR036976">
    <property type="entry name" value="RimM_N_sf"/>
</dbReference>
<dbReference type="InterPro" id="IPR009000">
    <property type="entry name" value="Transl_B-barrel_sf"/>
</dbReference>
<dbReference type="NCBIfam" id="TIGR02273">
    <property type="entry name" value="16S_RimM"/>
    <property type="match status" value="1"/>
</dbReference>
<dbReference type="PANTHER" id="PTHR33692">
    <property type="entry name" value="RIBOSOME MATURATION FACTOR RIMM"/>
    <property type="match status" value="1"/>
</dbReference>
<dbReference type="PANTHER" id="PTHR33692:SF1">
    <property type="entry name" value="RIBOSOME MATURATION FACTOR RIMM"/>
    <property type="match status" value="1"/>
</dbReference>
<dbReference type="Pfam" id="PF24986">
    <property type="entry name" value="PRC_RimM"/>
    <property type="match status" value="1"/>
</dbReference>
<dbReference type="Pfam" id="PF01782">
    <property type="entry name" value="RimM"/>
    <property type="match status" value="1"/>
</dbReference>
<dbReference type="SUPFAM" id="SSF50346">
    <property type="entry name" value="PRC-barrel domain"/>
    <property type="match status" value="1"/>
</dbReference>
<dbReference type="SUPFAM" id="SSF50447">
    <property type="entry name" value="Translation proteins"/>
    <property type="match status" value="1"/>
</dbReference>